<sequence>MANPLYHKHIISINDLSRDELELVLRTAASLKKTPQPELLKHKVIASCFFEASTRTRLSFETSIHRLGASVVGFSDSSNTSLGKKGETLADTMSVISTYVDAIVMRHPQEGASRLAAQFSGNVPIVNAGDGANQHPTQTLLDLFTIQETQGRLDNINIAMVGDLKYGRTVHSLTQALAKFNGNHFFFIAPDALAMPAYILQMLEEKEIEYSLHESLEEVVPELDILYMTRVQKERLDPSEYANVKAQFILRSSDLTGARDNLKVLHPLPRIDEITTDVDKTPYAYYFQQAGNGIFARQALLALVLNAELAL</sequence>
<feature type="chain" id="PRO_0000113237" description="Aspartate carbamoyltransferase catalytic subunit">
    <location>
        <begin position="1"/>
        <end position="311"/>
    </location>
</feature>
<feature type="binding site" evidence="1">
    <location>
        <position position="55"/>
    </location>
    <ligand>
        <name>carbamoyl phosphate</name>
        <dbReference type="ChEBI" id="CHEBI:58228"/>
    </ligand>
</feature>
<feature type="binding site" evidence="1">
    <location>
        <position position="56"/>
    </location>
    <ligand>
        <name>carbamoyl phosphate</name>
        <dbReference type="ChEBI" id="CHEBI:58228"/>
    </ligand>
</feature>
<feature type="binding site" evidence="1">
    <location>
        <position position="85"/>
    </location>
    <ligand>
        <name>L-aspartate</name>
        <dbReference type="ChEBI" id="CHEBI:29991"/>
    </ligand>
</feature>
<feature type="binding site" evidence="1">
    <location>
        <position position="106"/>
    </location>
    <ligand>
        <name>carbamoyl phosphate</name>
        <dbReference type="ChEBI" id="CHEBI:58228"/>
    </ligand>
</feature>
<feature type="binding site" evidence="1">
    <location>
        <position position="135"/>
    </location>
    <ligand>
        <name>carbamoyl phosphate</name>
        <dbReference type="ChEBI" id="CHEBI:58228"/>
    </ligand>
</feature>
<feature type="binding site" evidence="1">
    <location>
        <position position="138"/>
    </location>
    <ligand>
        <name>carbamoyl phosphate</name>
        <dbReference type="ChEBI" id="CHEBI:58228"/>
    </ligand>
</feature>
<feature type="binding site" evidence="1">
    <location>
        <position position="168"/>
    </location>
    <ligand>
        <name>L-aspartate</name>
        <dbReference type="ChEBI" id="CHEBI:29991"/>
    </ligand>
</feature>
<feature type="binding site" evidence="1">
    <location>
        <position position="230"/>
    </location>
    <ligand>
        <name>L-aspartate</name>
        <dbReference type="ChEBI" id="CHEBI:29991"/>
    </ligand>
</feature>
<feature type="binding site" evidence="1">
    <location>
        <position position="268"/>
    </location>
    <ligand>
        <name>carbamoyl phosphate</name>
        <dbReference type="ChEBI" id="CHEBI:58228"/>
    </ligand>
</feature>
<feature type="binding site" evidence="1">
    <location>
        <position position="269"/>
    </location>
    <ligand>
        <name>carbamoyl phosphate</name>
        <dbReference type="ChEBI" id="CHEBI:58228"/>
    </ligand>
</feature>
<feature type="turn" evidence="2">
    <location>
        <begin position="4"/>
        <end position="7"/>
    </location>
</feature>
<feature type="helix" evidence="2">
    <location>
        <begin position="13"/>
        <end position="15"/>
    </location>
</feature>
<feature type="helix" evidence="2">
    <location>
        <begin position="18"/>
        <end position="33"/>
    </location>
</feature>
<feature type="turn" evidence="2">
    <location>
        <begin position="37"/>
        <end position="42"/>
    </location>
</feature>
<feature type="strand" evidence="2">
    <location>
        <begin position="44"/>
        <end position="51"/>
    </location>
</feature>
<feature type="helix" evidence="2">
    <location>
        <begin position="54"/>
        <end position="66"/>
    </location>
</feature>
<feature type="strand" evidence="2">
    <location>
        <begin position="70"/>
        <end position="74"/>
    </location>
</feature>
<feature type="helix" evidence="2">
    <location>
        <begin position="89"/>
        <end position="99"/>
    </location>
</feature>
<feature type="strand" evidence="2">
    <location>
        <begin position="101"/>
        <end position="106"/>
    </location>
</feature>
<feature type="strand" evidence="2">
    <location>
        <begin position="108"/>
        <end position="110"/>
    </location>
</feature>
<feature type="helix" evidence="2">
    <location>
        <begin position="112"/>
        <end position="116"/>
    </location>
</feature>
<feature type="strand" evidence="2">
    <location>
        <begin position="125"/>
        <end position="129"/>
    </location>
</feature>
<feature type="helix" evidence="2">
    <location>
        <begin position="136"/>
        <end position="150"/>
    </location>
</feature>
<feature type="strand" evidence="2">
    <location>
        <begin position="153"/>
        <end position="155"/>
    </location>
</feature>
<feature type="strand" evidence="2">
    <location>
        <begin position="157"/>
        <end position="162"/>
    </location>
</feature>
<feature type="helix" evidence="2">
    <location>
        <begin position="168"/>
        <end position="177"/>
    </location>
</feature>
<feature type="strand" evidence="2">
    <location>
        <begin position="180"/>
        <end position="182"/>
    </location>
</feature>
<feature type="strand" evidence="2">
    <location>
        <begin position="184"/>
        <end position="188"/>
    </location>
</feature>
<feature type="helix" evidence="2">
    <location>
        <begin position="191"/>
        <end position="193"/>
    </location>
</feature>
<feature type="helix" evidence="2">
    <location>
        <begin position="197"/>
        <end position="205"/>
    </location>
</feature>
<feature type="strand" evidence="2">
    <location>
        <begin position="209"/>
        <end position="212"/>
    </location>
</feature>
<feature type="helix" evidence="2">
    <location>
        <begin position="216"/>
        <end position="218"/>
    </location>
</feature>
<feature type="helix" evidence="2">
    <location>
        <begin position="220"/>
        <end position="222"/>
    </location>
</feature>
<feature type="strand" evidence="2">
    <location>
        <begin position="224"/>
        <end position="228"/>
    </location>
</feature>
<feature type="helix" evidence="2">
    <location>
        <begin position="242"/>
        <end position="248"/>
    </location>
</feature>
<feature type="helix" evidence="2">
    <location>
        <begin position="252"/>
        <end position="255"/>
    </location>
</feature>
<feature type="strand" evidence="2">
    <location>
        <begin position="263"/>
        <end position="265"/>
    </location>
</feature>
<feature type="strand" evidence="2">
    <location>
        <begin position="271"/>
        <end position="274"/>
    </location>
</feature>
<feature type="helix" evidence="2">
    <location>
        <begin position="276"/>
        <end position="280"/>
    </location>
</feature>
<feature type="helix" evidence="2">
    <location>
        <begin position="286"/>
        <end position="305"/>
    </location>
</feature>
<organism>
    <name type="scientific">Yersinia pestis</name>
    <dbReference type="NCBI Taxonomy" id="632"/>
    <lineage>
        <taxon>Bacteria</taxon>
        <taxon>Pseudomonadati</taxon>
        <taxon>Pseudomonadota</taxon>
        <taxon>Gammaproteobacteria</taxon>
        <taxon>Enterobacterales</taxon>
        <taxon>Yersiniaceae</taxon>
        <taxon>Yersinia</taxon>
    </lineage>
</organism>
<gene>
    <name evidence="1" type="primary">pyrB</name>
    <name type="ordered locus">YPO3588</name>
    <name type="ordered locus">y0161</name>
    <name type="ordered locus">YP_3842</name>
</gene>
<dbReference type="EC" id="2.1.3.2" evidence="1"/>
<dbReference type="EMBL" id="AL590842">
    <property type="protein sequence ID" value="CAL22175.1"/>
    <property type="molecule type" value="Genomic_DNA"/>
</dbReference>
<dbReference type="EMBL" id="AE009952">
    <property type="protein sequence ID" value="AAM83755.1"/>
    <property type="molecule type" value="Genomic_DNA"/>
</dbReference>
<dbReference type="EMBL" id="AE017042">
    <property type="protein sequence ID" value="AAS63988.1"/>
    <property type="molecule type" value="Genomic_DNA"/>
</dbReference>
<dbReference type="PIR" id="AD0436">
    <property type="entry name" value="AD0436"/>
</dbReference>
<dbReference type="RefSeq" id="WP_002210111.1">
    <property type="nucleotide sequence ID" value="NZ_WUCM01000032.1"/>
</dbReference>
<dbReference type="RefSeq" id="YP_002348473.1">
    <property type="nucleotide sequence ID" value="NC_003143.1"/>
</dbReference>
<dbReference type="PDB" id="3LXM">
    <property type="method" value="X-ray"/>
    <property type="resolution" value="2.00 A"/>
    <property type="chains" value="A/B/C=1-311"/>
</dbReference>
<dbReference type="PDBsum" id="3LXM"/>
<dbReference type="SMR" id="Q8ZB39"/>
<dbReference type="IntAct" id="Q8ZB39">
    <property type="interactions" value="2"/>
</dbReference>
<dbReference type="STRING" id="214092.YPO3588"/>
<dbReference type="PaxDb" id="214092-YPO3588"/>
<dbReference type="DNASU" id="1145108"/>
<dbReference type="EnsemblBacteria" id="AAS63988">
    <property type="protein sequence ID" value="AAS63988"/>
    <property type="gene ID" value="YP_3842"/>
</dbReference>
<dbReference type="GeneID" id="57975128"/>
<dbReference type="KEGG" id="ype:YPO3588"/>
<dbReference type="KEGG" id="ypk:y0161"/>
<dbReference type="KEGG" id="ypm:YP_3842"/>
<dbReference type="PATRIC" id="fig|214092.21.peg.4081"/>
<dbReference type="eggNOG" id="COG0540">
    <property type="taxonomic scope" value="Bacteria"/>
</dbReference>
<dbReference type="HOGENOM" id="CLU_043846_1_2_6"/>
<dbReference type="OMA" id="DRIQPPG"/>
<dbReference type="OrthoDB" id="9774690at2"/>
<dbReference type="UniPathway" id="UPA00070">
    <property type="reaction ID" value="UER00116"/>
</dbReference>
<dbReference type="EvolutionaryTrace" id="Q8ZB39"/>
<dbReference type="Proteomes" id="UP000000815">
    <property type="component" value="Chromosome"/>
</dbReference>
<dbReference type="Proteomes" id="UP000001019">
    <property type="component" value="Chromosome"/>
</dbReference>
<dbReference type="Proteomes" id="UP000002490">
    <property type="component" value="Chromosome"/>
</dbReference>
<dbReference type="GO" id="GO:0016597">
    <property type="term" value="F:amino acid binding"/>
    <property type="evidence" value="ECO:0007669"/>
    <property type="project" value="InterPro"/>
</dbReference>
<dbReference type="GO" id="GO:0004070">
    <property type="term" value="F:aspartate carbamoyltransferase activity"/>
    <property type="evidence" value="ECO:0007669"/>
    <property type="project" value="UniProtKB-UniRule"/>
</dbReference>
<dbReference type="GO" id="GO:0006207">
    <property type="term" value="P:'de novo' pyrimidine nucleobase biosynthetic process"/>
    <property type="evidence" value="ECO:0007669"/>
    <property type="project" value="InterPro"/>
</dbReference>
<dbReference type="GO" id="GO:0044205">
    <property type="term" value="P:'de novo' UMP biosynthetic process"/>
    <property type="evidence" value="ECO:0007669"/>
    <property type="project" value="UniProtKB-UniRule"/>
</dbReference>
<dbReference type="GO" id="GO:0006520">
    <property type="term" value="P:amino acid metabolic process"/>
    <property type="evidence" value="ECO:0007669"/>
    <property type="project" value="InterPro"/>
</dbReference>
<dbReference type="FunFam" id="3.40.50.1370:FF:000001">
    <property type="entry name" value="Aspartate carbamoyltransferase"/>
    <property type="match status" value="1"/>
</dbReference>
<dbReference type="FunFam" id="3.40.50.1370:FF:000002">
    <property type="entry name" value="Aspartate carbamoyltransferase 2"/>
    <property type="match status" value="1"/>
</dbReference>
<dbReference type="Gene3D" id="3.40.50.1370">
    <property type="entry name" value="Aspartate/ornithine carbamoyltransferase"/>
    <property type="match status" value="2"/>
</dbReference>
<dbReference type="HAMAP" id="MF_00001">
    <property type="entry name" value="Asp_carb_tr"/>
    <property type="match status" value="1"/>
</dbReference>
<dbReference type="InterPro" id="IPR006132">
    <property type="entry name" value="Asp/Orn_carbamoyltranf_P-bd"/>
</dbReference>
<dbReference type="InterPro" id="IPR006130">
    <property type="entry name" value="Asp/Orn_carbamoylTrfase"/>
</dbReference>
<dbReference type="InterPro" id="IPR036901">
    <property type="entry name" value="Asp/Orn_carbamoylTrfase_sf"/>
</dbReference>
<dbReference type="InterPro" id="IPR002082">
    <property type="entry name" value="Asp_carbamoyltransf"/>
</dbReference>
<dbReference type="InterPro" id="IPR006131">
    <property type="entry name" value="Asp_carbamoyltransf_Asp/Orn-bd"/>
</dbReference>
<dbReference type="NCBIfam" id="TIGR00670">
    <property type="entry name" value="asp_carb_tr"/>
    <property type="match status" value="1"/>
</dbReference>
<dbReference type="NCBIfam" id="NF002032">
    <property type="entry name" value="PRK00856.1"/>
    <property type="match status" value="1"/>
</dbReference>
<dbReference type="PANTHER" id="PTHR45753:SF6">
    <property type="entry name" value="ASPARTATE CARBAMOYLTRANSFERASE"/>
    <property type="match status" value="1"/>
</dbReference>
<dbReference type="PANTHER" id="PTHR45753">
    <property type="entry name" value="ORNITHINE CARBAMOYLTRANSFERASE, MITOCHONDRIAL"/>
    <property type="match status" value="1"/>
</dbReference>
<dbReference type="Pfam" id="PF00185">
    <property type="entry name" value="OTCace"/>
    <property type="match status" value="1"/>
</dbReference>
<dbReference type="Pfam" id="PF02729">
    <property type="entry name" value="OTCace_N"/>
    <property type="match status" value="1"/>
</dbReference>
<dbReference type="PRINTS" id="PR00100">
    <property type="entry name" value="AOTCASE"/>
</dbReference>
<dbReference type="PRINTS" id="PR00101">
    <property type="entry name" value="ATCASE"/>
</dbReference>
<dbReference type="SUPFAM" id="SSF53671">
    <property type="entry name" value="Aspartate/ornithine carbamoyltransferase"/>
    <property type="match status" value="1"/>
</dbReference>
<dbReference type="PROSITE" id="PS00097">
    <property type="entry name" value="CARBAMOYLTRANSFERASE"/>
    <property type="match status" value="1"/>
</dbReference>
<name>PYRB_YERPE</name>
<comment type="function">
    <text evidence="1">Catalyzes the condensation of carbamoyl phosphate and aspartate to form carbamoyl aspartate and inorganic phosphate, the committed step in the de novo pyrimidine nucleotide biosynthesis pathway.</text>
</comment>
<comment type="catalytic activity">
    <reaction evidence="1">
        <text>carbamoyl phosphate + L-aspartate = N-carbamoyl-L-aspartate + phosphate + H(+)</text>
        <dbReference type="Rhea" id="RHEA:20013"/>
        <dbReference type="ChEBI" id="CHEBI:15378"/>
        <dbReference type="ChEBI" id="CHEBI:29991"/>
        <dbReference type="ChEBI" id="CHEBI:32814"/>
        <dbReference type="ChEBI" id="CHEBI:43474"/>
        <dbReference type="ChEBI" id="CHEBI:58228"/>
        <dbReference type="EC" id="2.1.3.2"/>
    </reaction>
</comment>
<comment type="pathway">
    <text evidence="1">Pyrimidine metabolism; UMP biosynthesis via de novo pathway; (S)-dihydroorotate from bicarbonate: step 2/3.</text>
</comment>
<comment type="subunit">
    <text evidence="1">Heterododecamer (2C3:3R2) of six catalytic PyrB chains organized as two trimers (C3), and six regulatory PyrI chains organized as three dimers (R2).</text>
</comment>
<comment type="similarity">
    <text evidence="1">Belongs to the aspartate/ornithine carbamoyltransferase superfamily. ATCase family.</text>
</comment>
<keyword id="KW-0002">3D-structure</keyword>
<keyword id="KW-0665">Pyrimidine biosynthesis</keyword>
<keyword id="KW-1185">Reference proteome</keyword>
<keyword id="KW-0808">Transferase</keyword>
<reference key="1">
    <citation type="journal article" date="2001" name="Nature">
        <title>Genome sequence of Yersinia pestis, the causative agent of plague.</title>
        <authorList>
            <person name="Parkhill J."/>
            <person name="Wren B.W."/>
            <person name="Thomson N.R."/>
            <person name="Titball R.W."/>
            <person name="Holden M.T.G."/>
            <person name="Prentice M.B."/>
            <person name="Sebaihia M."/>
            <person name="James K.D."/>
            <person name="Churcher C.M."/>
            <person name="Mungall K.L."/>
            <person name="Baker S."/>
            <person name="Basham D."/>
            <person name="Bentley S.D."/>
            <person name="Brooks K."/>
            <person name="Cerdeno-Tarraga A.-M."/>
            <person name="Chillingworth T."/>
            <person name="Cronin A."/>
            <person name="Davies R.M."/>
            <person name="Davis P."/>
            <person name="Dougan G."/>
            <person name="Feltwell T."/>
            <person name="Hamlin N."/>
            <person name="Holroyd S."/>
            <person name="Jagels K."/>
            <person name="Karlyshev A.V."/>
            <person name="Leather S."/>
            <person name="Moule S."/>
            <person name="Oyston P.C.F."/>
            <person name="Quail M.A."/>
            <person name="Rutherford K.M."/>
            <person name="Simmonds M."/>
            <person name="Skelton J."/>
            <person name="Stevens K."/>
            <person name="Whitehead S."/>
            <person name="Barrell B.G."/>
        </authorList>
    </citation>
    <scope>NUCLEOTIDE SEQUENCE [LARGE SCALE GENOMIC DNA]</scope>
    <source>
        <strain>CO-92 / Biovar Orientalis</strain>
    </source>
</reference>
<reference key="2">
    <citation type="journal article" date="2002" name="J. Bacteriol.">
        <title>Genome sequence of Yersinia pestis KIM.</title>
        <authorList>
            <person name="Deng W."/>
            <person name="Burland V."/>
            <person name="Plunkett G. III"/>
            <person name="Boutin A."/>
            <person name="Mayhew G.F."/>
            <person name="Liss P."/>
            <person name="Perna N.T."/>
            <person name="Rose D.J."/>
            <person name="Mau B."/>
            <person name="Zhou S."/>
            <person name="Schwartz D.C."/>
            <person name="Fetherston J.D."/>
            <person name="Lindler L.E."/>
            <person name="Brubaker R.R."/>
            <person name="Plano G.V."/>
            <person name="Straley S.C."/>
            <person name="McDonough K.A."/>
            <person name="Nilles M.L."/>
            <person name="Matson J.S."/>
            <person name="Blattner F.R."/>
            <person name="Perry R.D."/>
        </authorList>
    </citation>
    <scope>NUCLEOTIDE SEQUENCE [LARGE SCALE GENOMIC DNA]</scope>
    <source>
        <strain>KIM10+ / Biovar Mediaevalis</strain>
    </source>
</reference>
<reference key="3">
    <citation type="journal article" date="2004" name="DNA Res.">
        <title>Complete genome sequence of Yersinia pestis strain 91001, an isolate avirulent to humans.</title>
        <authorList>
            <person name="Song Y."/>
            <person name="Tong Z."/>
            <person name="Wang J."/>
            <person name="Wang L."/>
            <person name="Guo Z."/>
            <person name="Han Y."/>
            <person name="Zhang J."/>
            <person name="Pei D."/>
            <person name="Zhou D."/>
            <person name="Qin H."/>
            <person name="Pang X."/>
            <person name="Han Y."/>
            <person name="Zhai J."/>
            <person name="Li M."/>
            <person name="Cui B."/>
            <person name="Qi Z."/>
            <person name="Jin L."/>
            <person name="Dai R."/>
            <person name="Chen F."/>
            <person name="Li S."/>
            <person name="Ye C."/>
            <person name="Du Z."/>
            <person name="Lin W."/>
            <person name="Wang J."/>
            <person name="Yu J."/>
            <person name="Yang H."/>
            <person name="Wang J."/>
            <person name="Huang P."/>
            <person name="Yang R."/>
        </authorList>
    </citation>
    <scope>NUCLEOTIDE SEQUENCE [LARGE SCALE GENOMIC DNA]</scope>
    <source>
        <strain>91001 / Biovar Mediaevalis</strain>
    </source>
</reference>
<accession>Q8ZB39</accession>
<accession>Q0WB65</accession>
<protein>
    <recommendedName>
        <fullName evidence="1">Aspartate carbamoyltransferase catalytic subunit</fullName>
        <ecNumber evidence="1">2.1.3.2</ecNumber>
    </recommendedName>
    <alternativeName>
        <fullName evidence="1">Aspartate transcarbamylase</fullName>
        <shortName evidence="1">ATCase</shortName>
    </alternativeName>
</protein>
<proteinExistence type="evidence at protein level"/>
<evidence type="ECO:0000255" key="1">
    <source>
        <dbReference type="HAMAP-Rule" id="MF_00001"/>
    </source>
</evidence>
<evidence type="ECO:0007829" key="2">
    <source>
        <dbReference type="PDB" id="3LXM"/>
    </source>
</evidence>